<evidence type="ECO:0000250" key="1">
    <source>
        <dbReference type="UniProtKB" id="P49915"/>
    </source>
</evidence>
<evidence type="ECO:0000250" key="2">
    <source>
        <dbReference type="UniProtKB" id="Q4WFT3"/>
    </source>
</evidence>
<evidence type="ECO:0000250" key="3">
    <source>
        <dbReference type="UniProtKB" id="Q9P772"/>
    </source>
</evidence>
<evidence type="ECO:0000255" key="4">
    <source>
        <dbReference type="PROSITE-ProRule" id="PRU00605"/>
    </source>
</evidence>
<evidence type="ECO:0000255" key="5">
    <source>
        <dbReference type="PROSITE-ProRule" id="PRU00886"/>
    </source>
</evidence>
<evidence type="ECO:0000269" key="6">
    <source>
    </source>
</evidence>
<evidence type="ECO:0000269" key="7">
    <source>
    </source>
</evidence>
<evidence type="ECO:0000303" key="8">
    <source>
    </source>
</evidence>
<evidence type="ECO:0000305" key="9"/>
<evidence type="ECO:0000305" key="10">
    <source>
    </source>
</evidence>
<evidence type="ECO:0007744" key="11">
    <source>
    </source>
</evidence>
<comment type="function">
    <text evidence="7">Catalyzes the conversion of xanthine monophosphate (XMP) to GMP in the presence of glutamine and ATP through an adenyl-XMP intermediate.</text>
</comment>
<comment type="catalytic activity">
    <reaction evidence="10">
        <text>XMP + L-glutamine + ATP + H2O = GMP + L-glutamate + AMP + diphosphate + 2 H(+)</text>
        <dbReference type="Rhea" id="RHEA:11680"/>
        <dbReference type="ChEBI" id="CHEBI:15377"/>
        <dbReference type="ChEBI" id="CHEBI:15378"/>
        <dbReference type="ChEBI" id="CHEBI:29985"/>
        <dbReference type="ChEBI" id="CHEBI:30616"/>
        <dbReference type="ChEBI" id="CHEBI:33019"/>
        <dbReference type="ChEBI" id="CHEBI:57464"/>
        <dbReference type="ChEBI" id="CHEBI:58115"/>
        <dbReference type="ChEBI" id="CHEBI:58359"/>
        <dbReference type="ChEBI" id="CHEBI:456215"/>
        <dbReference type="EC" id="6.3.5.2"/>
    </reaction>
</comment>
<comment type="cofactor">
    <cofactor evidence="2">
        <name>Mg(2+)</name>
        <dbReference type="ChEBI" id="CHEBI:18420"/>
    </cofactor>
</comment>
<comment type="pathway">
    <text evidence="7">Purine metabolism; GMP biosynthesis; GMP from XMP (L-Gln route): step 1/1.</text>
</comment>
<comment type="subunit">
    <text evidence="2">Homodimer.</text>
</comment>
<comment type="subcellular location">
    <subcellularLocation>
        <location evidence="3">Cytoplasm</location>
        <location evidence="3">Cytosol</location>
    </subcellularLocation>
</comment>
<reference key="1">
    <citation type="journal article" date="1994" name="Gene">
        <title>Cloning and sequencing of the GMP synthetase-encoding gene of Saccharomyces cerevisiae.</title>
        <authorList>
            <person name="Dujardin G."/>
            <person name="Kermorgant M."/>
            <person name="Slonimski P.P."/>
            <person name="Boucherie H."/>
        </authorList>
    </citation>
    <scope>NUCLEOTIDE SEQUENCE [GENOMIC DNA]</scope>
    <scope>FUNCTION</scope>
    <scope>CATALYTIC ACTIVITY</scope>
    <scope>PATHWAY</scope>
    <source>
        <strain>ATCC 44827 / SKQ2N</strain>
    </source>
</reference>
<reference key="2">
    <citation type="journal article" date="1997" name="Nature">
        <title>The nucleotide sequence of Saccharomyces cerevisiae chromosome XIII.</title>
        <authorList>
            <person name="Bowman S."/>
            <person name="Churcher C.M."/>
            <person name="Badcock K."/>
            <person name="Brown D."/>
            <person name="Chillingworth T."/>
            <person name="Connor R."/>
            <person name="Dedman K."/>
            <person name="Devlin K."/>
            <person name="Gentles S."/>
            <person name="Hamlin N."/>
            <person name="Hunt S."/>
            <person name="Jagels K."/>
            <person name="Lye G."/>
            <person name="Moule S."/>
            <person name="Odell C."/>
            <person name="Pearson D."/>
            <person name="Rajandream M.A."/>
            <person name="Rice P."/>
            <person name="Skelton J."/>
            <person name="Walsh S.V."/>
            <person name="Whitehead S."/>
            <person name="Barrell B.G."/>
        </authorList>
    </citation>
    <scope>NUCLEOTIDE SEQUENCE [LARGE SCALE GENOMIC DNA]</scope>
    <source>
        <strain>ATCC 204508 / S288c</strain>
    </source>
</reference>
<reference key="3">
    <citation type="journal article" date="2014" name="G3 (Bethesda)">
        <title>The reference genome sequence of Saccharomyces cerevisiae: Then and now.</title>
        <authorList>
            <person name="Engel S.R."/>
            <person name="Dietrich F.S."/>
            <person name="Fisk D.G."/>
            <person name="Binkley G."/>
            <person name="Balakrishnan R."/>
            <person name="Costanzo M.C."/>
            <person name="Dwight S.S."/>
            <person name="Hitz B.C."/>
            <person name="Karra K."/>
            <person name="Nash R.S."/>
            <person name="Weng S."/>
            <person name="Wong E.D."/>
            <person name="Lloyd P."/>
            <person name="Skrzypek M.S."/>
            <person name="Miyasato S.R."/>
            <person name="Simison M."/>
            <person name="Cherry J.M."/>
        </authorList>
    </citation>
    <scope>GENOME REANNOTATION</scope>
    <source>
        <strain>ATCC 204508 / S288c</strain>
    </source>
</reference>
<reference key="4">
    <citation type="journal article" date="1995" name="Yeast">
        <title>Two-dimensional protein map of Saccharomyces cerevisiae: construction of a gene-protein index.</title>
        <authorList>
            <person name="Boucherie H."/>
            <person name="Dujardin G."/>
            <person name="Kermorgant M."/>
            <person name="Monribot C."/>
            <person name="Slonimski P.P."/>
            <person name="Perrot M."/>
        </authorList>
    </citation>
    <scope>PROTEIN SEQUENCE OF 2-20</scope>
    <source>
        <strain>ATCC 204508 / S288c</strain>
    </source>
</reference>
<reference key="5">
    <citation type="journal article" date="2012" name="Proteomics">
        <title>Sites of ubiquitin attachment in Saccharomyces cerevisiae.</title>
        <authorList>
            <person name="Starita L.M."/>
            <person name="Lo R.S."/>
            <person name="Eng J.K."/>
            <person name="von Haller P.D."/>
            <person name="Fields S."/>
        </authorList>
    </citation>
    <scope>UBIQUITINATION [LARGE SCALE ANALYSIS] AT LYS-241 AND LYS-426</scope>
    <scope>IDENTIFICATION BY MASS SPECTROMETRY [LARGE SCALE ANALYSIS]</scope>
</reference>
<protein>
    <recommendedName>
        <fullName evidence="8">GMP synthase [glutamine-hydrolyzing]</fullName>
        <ecNumber evidence="10">6.3.5.2</ecNumber>
    </recommendedName>
    <alternativeName>
        <fullName evidence="8">GMP synthetase</fullName>
    </alternativeName>
    <alternativeName>
        <fullName evidence="9">Glutamine amidotransferase</fullName>
    </alternativeName>
</protein>
<organism>
    <name type="scientific">Saccharomyces cerevisiae (strain ATCC 204508 / S288c)</name>
    <name type="common">Baker's yeast</name>
    <dbReference type="NCBI Taxonomy" id="559292"/>
    <lineage>
        <taxon>Eukaryota</taxon>
        <taxon>Fungi</taxon>
        <taxon>Dikarya</taxon>
        <taxon>Ascomycota</taxon>
        <taxon>Saccharomycotina</taxon>
        <taxon>Saccharomycetes</taxon>
        <taxon>Saccharomycetales</taxon>
        <taxon>Saccharomycetaceae</taxon>
        <taxon>Saccharomyces</taxon>
    </lineage>
</organism>
<name>GUAA_YEAST</name>
<dbReference type="EC" id="6.3.5.2" evidence="10"/>
<dbReference type="EMBL" id="X70397">
    <property type="protein sequence ID" value="CAA49847.1"/>
    <property type="molecule type" value="Genomic_DNA"/>
</dbReference>
<dbReference type="EMBL" id="Z49809">
    <property type="protein sequence ID" value="CAA89932.1"/>
    <property type="molecule type" value="Genomic_DNA"/>
</dbReference>
<dbReference type="EMBL" id="BK006946">
    <property type="protein sequence ID" value="DAA10116.1"/>
    <property type="molecule type" value="Genomic_DNA"/>
</dbReference>
<dbReference type="PIR" id="S55099">
    <property type="entry name" value="S55099"/>
</dbReference>
<dbReference type="RefSeq" id="NP_013944.1">
    <property type="nucleotide sequence ID" value="NM_001182724.1"/>
</dbReference>
<dbReference type="SMR" id="P38625"/>
<dbReference type="BioGRID" id="35395">
    <property type="interactions" value="53"/>
</dbReference>
<dbReference type="FunCoup" id="P38625">
    <property type="interactions" value="1309"/>
</dbReference>
<dbReference type="IntAct" id="P38625">
    <property type="interactions" value="6"/>
</dbReference>
<dbReference type="MINT" id="P38625"/>
<dbReference type="STRING" id="4932.YMR217W"/>
<dbReference type="MEROPS" id="C26.957"/>
<dbReference type="GlyGen" id="P38625">
    <property type="glycosylation" value="1 site"/>
</dbReference>
<dbReference type="iPTMnet" id="P38625"/>
<dbReference type="PaxDb" id="4932-YMR217W"/>
<dbReference type="PeptideAtlas" id="P38625"/>
<dbReference type="EnsemblFungi" id="YMR217W_mRNA">
    <property type="protein sequence ID" value="YMR217W"/>
    <property type="gene ID" value="YMR217W"/>
</dbReference>
<dbReference type="GeneID" id="855257"/>
<dbReference type="KEGG" id="sce:YMR217W"/>
<dbReference type="AGR" id="SGD:S000004830"/>
<dbReference type="SGD" id="S000004830">
    <property type="gene designation" value="GUA1"/>
</dbReference>
<dbReference type="VEuPathDB" id="FungiDB:YMR217W"/>
<dbReference type="eggNOG" id="KOG1622">
    <property type="taxonomic scope" value="Eukaryota"/>
</dbReference>
<dbReference type="GeneTree" id="ENSGT00390000006591"/>
<dbReference type="HOGENOM" id="CLU_014340_0_5_1"/>
<dbReference type="InParanoid" id="P38625"/>
<dbReference type="OMA" id="IWQSFAV"/>
<dbReference type="OrthoDB" id="1724632at2759"/>
<dbReference type="BioCyc" id="MetaCyc:YMR217W-MONOMER"/>
<dbReference type="BioCyc" id="YEAST:YMR217W-MONOMER"/>
<dbReference type="Reactome" id="R-SCE-73817">
    <property type="pathway name" value="Purine ribonucleoside monophosphate biosynthesis"/>
</dbReference>
<dbReference type="Reactome" id="R-SCE-9748787">
    <property type="pathway name" value="Azathioprine ADME"/>
</dbReference>
<dbReference type="UniPathway" id="UPA00189">
    <property type="reaction ID" value="UER00296"/>
</dbReference>
<dbReference type="BioGRID-ORCS" id="855257">
    <property type="hits" value="9 hits in 10 CRISPR screens"/>
</dbReference>
<dbReference type="CD-CODE" id="E03F929F">
    <property type="entry name" value="Stress granule"/>
</dbReference>
<dbReference type="PRO" id="PR:P38625"/>
<dbReference type="Proteomes" id="UP000002311">
    <property type="component" value="Chromosome XIII"/>
</dbReference>
<dbReference type="RNAct" id="P38625">
    <property type="molecule type" value="protein"/>
</dbReference>
<dbReference type="GO" id="GO:0005829">
    <property type="term" value="C:cytosol"/>
    <property type="evidence" value="ECO:0000318"/>
    <property type="project" value="GO_Central"/>
</dbReference>
<dbReference type="GO" id="GO:0005524">
    <property type="term" value="F:ATP binding"/>
    <property type="evidence" value="ECO:0007669"/>
    <property type="project" value="UniProtKB-KW"/>
</dbReference>
<dbReference type="GO" id="GO:0003922">
    <property type="term" value="F:GMP synthase (glutamine-hydrolyzing) activity"/>
    <property type="evidence" value="ECO:0000315"/>
    <property type="project" value="SGD"/>
</dbReference>
<dbReference type="GO" id="GO:0003921">
    <property type="term" value="F:GMP synthase activity"/>
    <property type="evidence" value="ECO:0000318"/>
    <property type="project" value="GO_Central"/>
</dbReference>
<dbReference type="GO" id="GO:0006177">
    <property type="term" value="P:GMP biosynthetic process"/>
    <property type="evidence" value="ECO:0000315"/>
    <property type="project" value="SGD"/>
</dbReference>
<dbReference type="CDD" id="cd01742">
    <property type="entry name" value="GATase1_GMP_Synthase"/>
    <property type="match status" value="1"/>
</dbReference>
<dbReference type="CDD" id="cd01997">
    <property type="entry name" value="GMP_synthase_C"/>
    <property type="match status" value="1"/>
</dbReference>
<dbReference type="FunFam" id="3.30.300.10:FF:000002">
    <property type="entry name" value="GMP synthase [glutamine-hydrolyzing]"/>
    <property type="match status" value="1"/>
</dbReference>
<dbReference type="FunFam" id="3.40.50.620:FF:000001">
    <property type="entry name" value="GMP synthase [glutamine-hydrolyzing]"/>
    <property type="match status" value="1"/>
</dbReference>
<dbReference type="FunFam" id="3.40.50.880:FF:000001">
    <property type="entry name" value="GMP synthase [glutamine-hydrolyzing]"/>
    <property type="match status" value="1"/>
</dbReference>
<dbReference type="Gene3D" id="3.30.300.10">
    <property type="match status" value="1"/>
</dbReference>
<dbReference type="Gene3D" id="3.40.50.880">
    <property type="match status" value="1"/>
</dbReference>
<dbReference type="Gene3D" id="3.40.50.620">
    <property type="entry name" value="HUPs"/>
    <property type="match status" value="1"/>
</dbReference>
<dbReference type="HAMAP" id="MF_00344">
    <property type="entry name" value="GMP_synthase"/>
    <property type="match status" value="1"/>
</dbReference>
<dbReference type="InterPro" id="IPR029062">
    <property type="entry name" value="Class_I_gatase-like"/>
</dbReference>
<dbReference type="InterPro" id="IPR017926">
    <property type="entry name" value="GATASE"/>
</dbReference>
<dbReference type="InterPro" id="IPR001674">
    <property type="entry name" value="GMP_synth_C"/>
</dbReference>
<dbReference type="InterPro" id="IPR004739">
    <property type="entry name" value="GMP_synth_GATase"/>
</dbReference>
<dbReference type="InterPro" id="IPR022955">
    <property type="entry name" value="GMP_synthase"/>
</dbReference>
<dbReference type="InterPro" id="IPR025777">
    <property type="entry name" value="GMPS_ATP_PPase_dom"/>
</dbReference>
<dbReference type="InterPro" id="IPR022310">
    <property type="entry name" value="NAD/GMP_synthase"/>
</dbReference>
<dbReference type="InterPro" id="IPR014729">
    <property type="entry name" value="Rossmann-like_a/b/a_fold"/>
</dbReference>
<dbReference type="NCBIfam" id="TIGR00884">
    <property type="entry name" value="guaA_Cterm"/>
    <property type="match status" value="1"/>
</dbReference>
<dbReference type="NCBIfam" id="TIGR00888">
    <property type="entry name" value="guaA_Nterm"/>
    <property type="match status" value="1"/>
</dbReference>
<dbReference type="NCBIfam" id="NF000848">
    <property type="entry name" value="PRK00074.1"/>
    <property type="match status" value="1"/>
</dbReference>
<dbReference type="PANTHER" id="PTHR11922:SF2">
    <property type="entry name" value="GMP SYNTHASE [GLUTAMINE-HYDROLYZING]"/>
    <property type="match status" value="1"/>
</dbReference>
<dbReference type="PANTHER" id="PTHR11922">
    <property type="entry name" value="GMP SYNTHASE-RELATED"/>
    <property type="match status" value="1"/>
</dbReference>
<dbReference type="Pfam" id="PF00117">
    <property type="entry name" value="GATase"/>
    <property type="match status" value="1"/>
</dbReference>
<dbReference type="Pfam" id="PF00958">
    <property type="entry name" value="GMP_synt_C"/>
    <property type="match status" value="1"/>
</dbReference>
<dbReference type="Pfam" id="PF02540">
    <property type="entry name" value="NAD_synthase"/>
    <property type="match status" value="1"/>
</dbReference>
<dbReference type="PRINTS" id="PR00097">
    <property type="entry name" value="ANTSNTHASEII"/>
</dbReference>
<dbReference type="PRINTS" id="PR00096">
    <property type="entry name" value="GATASE"/>
</dbReference>
<dbReference type="SUPFAM" id="SSF52402">
    <property type="entry name" value="Adenine nucleotide alpha hydrolases-like"/>
    <property type="match status" value="1"/>
</dbReference>
<dbReference type="SUPFAM" id="SSF52317">
    <property type="entry name" value="Class I glutamine amidotransferase-like"/>
    <property type="match status" value="1"/>
</dbReference>
<dbReference type="SUPFAM" id="SSF54810">
    <property type="entry name" value="GMP synthetase C-terminal dimerisation domain"/>
    <property type="match status" value="1"/>
</dbReference>
<dbReference type="PROSITE" id="PS51273">
    <property type="entry name" value="GATASE_TYPE_1"/>
    <property type="match status" value="1"/>
</dbReference>
<dbReference type="PROSITE" id="PS51553">
    <property type="entry name" value="GMPS_ATP_PPASE"/>
    <property type="match status" value="1"/>
</dbReference>
<feature type="initiator methionine" description="Removed" evidence="6">
    <location>
        <position position="1"/>
    </location>
</feature>
<feature type="chain" id="PRO_0000140258" description="GMP synthase [glutamine-hydrolyzing]">
    <location>
        <begin position="2"/>
        <end position="525"/>
    </location>
</feature>
<feature type="domain" description="Glutamine amidotransferase type-1" evidence="4">
    <location>
        <begin position="13"/>
        <end position="202"/>
    </location>
</feature>
<feature type="domain" description="GMPS ATP-PPase" evidence="5">
    <location>
        <begin position="203"/>
        <end position="400"/>
    </location>
</feature>
<feature type="active site" description="Nucleophile" evidence="4">
    <location>
        <position position="89"/>
    </location>
</feature>
<feature type="active site" evidence="4">
    <location>
        <position position="176"/>
    </location>
</feature>
<feature type="active site" evidence="4">
    <location>
        <position position="178"/>
    </location>
</feature>
<feature type="binding site" evidence="5">
    <location>
        <begin position="231"/>
        <end position="237"/>
    </location>
    <ligand>
        <name>ATP</name>
        <dbReference type="ChEBI" id="CHEBI:30616"/>
    </ligand>
</feature>
<feature type="binding site" evidence="1">
    <location>
        <position position="304"/>
    </location>
    <ligand>
        <name>XMP</name>
        <dbReference type="ChEBI" id="CHEBI:57464"/>
    </ligand>
</feature>
<feature type="binding site" evidence="1">
    <location>
        <position position="462"/>
    </location>
    <ligand>
        <name>XMP</name>
        <dbReference type="ChEBI" id="CHEBI:57464"/>
    </ligand>
</feature>
<feature type="binding site" evidence="1">
    <location>
        <position position="517"/>
    </location>
    <ligand>
        <name>XMP</name>
        <dbReference type="ChEBI" id="CHEBI:57464"/>
    </ligand>
</feature>
<feature type="binding site" evidence="1">
    <location>
        <position position="523"/>
    </location>
    <ligand>
        <name>XMP</name>
        <dbReference type="ChEBI" id="CHEBI:57464"/>
    </ligand>
</feature>
<feature type="cross-link" description="Glycyl lysine isopeptide (Lys-Gly) (interchain with G-Cter in ubiquitin)" evidence="11">
    <location>
        <position position="241"/>
    </location>
</feature>
<feature type="cross-link" description="Glycyl lysine isopeptide (Lys-Gly) (interchain with G-Cter in ubiquitin)" evidence="11">
    <location>
        <position position="426"/>
    </location>
</feature>
<feature type="sequence conflict" description="In Ref. 1; CAA49847." evidence="9" ref="1">
    <original>K</original>
    <variation>R</variation>
    <location>
        <position position="325"/>
    </location>
</feature>
<proteinExistence type="evidence at protein level"/>
<accession>P38625</accession>
<accession>D6W042</accession>
<gene>
    <name evidence="8" type="primary">GUA1</name>
    <name type="ordered locus">YMR217W</name>
    <name type="ORF">YM8261.11</name>
</gene>
<keyword id="KW-0067">ATP-binding</keyword>
<keyword id="KW-0963">Cytoplasm</keyword>
<keyword id="KW-0903">Direct protein sequencing</keyword>
<keyword id="KW-0315">Glutamine amidotransferase</keyword>
<keyword id="KW-0332">GMP biosynthesis</keyword>
<keyword id="KW-1017">Isopeptide bond</keyword>
<keyword id="KW-0436">Ligase</keyword>
<keyword id="KW-0460">Magnesium</keyword>
<keyword id="KW-0547">Nucleotide-binding</keyword>
<keyword id="KW-0658">Purine biosynthesis</keyword>
<keyword id="KW-1185">Reference proteome</keyword>
<keyword id="KW-0832">Ubl conjugation</keyword>
<sequence length="525" mass="58482">MAAGEQVSNMFDTILVLDFGSQYSHLITRRLREFNIYAEMLPCTQKISELGWTPKGVILSGGPYSVYAEDAPHVDHAIFDLNVPILGICYGMQELAWINGKQVGRGDKREYGPATLKVIDDSNSLFKGMNDSTVWMSHGDKLHGLPTGYKTIATSDNSPYCGIVHETKPIYGIQFHPEVTHSTQGKTLLKNFAVDLCHAKQNWTMENFIDTEINRIRKLVGPTAEVIGAVSGGVDSTVASKLMTEAIGDRFHAILVDNGVLRLNEAANVKKTLVEGLGINLMVVDASEEFLSKLKGVTDPEKKRKIIGNTFIHVFEREAEKIKPKDGKEIQFLLQGTLYPDVIESISFKGPSQTIKTHHNVGGLLENMKLKLIEPLRELFKDEVRHLGELLGIPHDLVWRHPFPGPGIAIRVLGEVTKEQVEIARKADNIYIEEIKKAGLYNQISQAFACLLPVKSVGVMGDQRTYDQVIALRAIETTDFMTADWFPFEHSFLKKVASRIVNEVDGVARVTYDITSKPPATVEWE</sequence>